<accession>P35395</accession>
<proteinExistence type="evidence at transcript level"/>
<comment type="subcellular location">
    <subcellularLocation>
        <location>Secreted</location>
    </subcellularLocation>
</comment>
<comment type="tissue specificity">
    <text>Pituitary gland.</text>
</comment>
<comment type="similarity">
    <text evidence="2">Belongs to the somatotropin/prolactin family.</text>
</comment>
<gene>
    <name type="primary">prl</name>
</gene>
<keyword id="KW-1015">Disulfide bond</keyword>
<keyword id="KW-0372">Hormone</keyword>
<keyword id="KW-0964">Secreted</keyword>
<keyword id="KW-0732">Signal</keyword>
<organism>
    <name type="scientific">Hypophthalmichthys molitrix</name>
    <name type="common">Silver carp</name>
    <name type="synonym">Leuciscus molitrix</name>
    <dbReference type="NCBI Taxonomy" id="13095"/>
    <lineage>
        <taxon>Eukaryota</taxon>
        <taxon>Metazoa</taxon>
        <taxon>Chordata</taxon>
        <taxon>Craniata</taxon>
        <taxon>Vertebrata</taxon>
        <taxon>Euteleostomi</taxon>
        <taxon>Actinopterygii</taxon>
        <taxon>Neopterygii</taxon>
        <taxon>Teleostei</taxon>
        <taxon>Ostariophysi</taxon>
        <taxon>Cypriniformes</taxon>
        <taxon>Xenocyprididae</taxon>
        <taxon>Xenocypridinae</taxon>
        <taxon>Hypophthalmichthys</taxon>
    </lineage>
</organism>
<sequence>KSRLYFAVTVLMCAFVSINGVGLNDLLERASQLSDKLHSLSTSLTNDLDSHFPPVGRVMMPRPSMCHTSSLQIPNDKDQALKVPEDELLSLARSLLLAWSDPLALLSSKASSLAHPERNTINSKTKELQDNINSLVPGLEHVVHKMGSSSDNLSSLPFYSNSLGQDKTSRLVNFHFLLSCFRRDSHKIDSFLKVLRCRAAKKRPEMC</sequence>
<feature type="signal peptide" evidence="1">
    <location>
        <begin position="1" status="less than"/>
        <end position="20"/>
    </location>
</feature>
<feature type="chain" id="PRO_0000032936" description="Prolactin">
    <location>
        <begin position="21"/>
        <end position="207"/>
    </location>
</feature>
<feature type="disulfide bond" evidence="1">
    <location>
        <begin position="66"/>
        <end position="180"/>
    </location>
</feature>
<feature type="disulfide bond" evidence="1">
    <location>
        <begin position="197"/>
        <end position="207"/>
    </location>
</feature>
<feature type="non-terminal residue">
    <location>
        <position position="1"/>
    </location>
</feature>
<name>PRL_HYPMO</name>
<reference key="1">
    <citation type="journal article" date="1992" name="Gen. Comp. Endocrinol.">
        <title>Molecular cloning of silver carp and bighead carp prolactin.</title>
        <authorList>
            <person name="Chang Y.S."/>
            <person name="Huang F.-L."/>
            <person name="Lo T.B."/>
        </authorList>
    </citation>
    <scope>NUCLEOTIDE SEQUENCE [MRNA]</scope>
    <source>
        <tissue>Pituitary</tissue>
    </source>
</reference>
<evidence type="ECO:0000250" key="1"/>
<evidence type="ECO:0000305" key="2"/>
<protein>
    <recommendedName>
        <fullName>Prolactin</fullName>
        <shortName>PRL</shortName>
    </recommendedName>
</protein>
<dbReference type="EMBL" id="X61052">
    <property type="protein sequence ID" value="CAA43386.1"/>
    <property type="molecule type" value="mRNA"/>
</dbReference>
<dbReference type="PIR" id="S21965">
    <property type="entry name" value="S21965"/>
</dbReference>
<dbReference type="SMR" id="P35395"/>
<dbReference type="GO" id="GO:0005615">
    <property type="term" value="C:extracellular space"/>
    <property type="evidence" value="ECO:0007669"/>
    <property type="project" value="TreeGrafter"/>
</dbReference>
<dbReference type="GO" id="GO:0005179">
    <property type="term" value="F:hormone activity"/>
    <property type="evidence" value="ECO:0007669"/>
    <property type="project" value="UniProtKB-KW"/>
</dbReference>
<dbReference type="GO" id="GO:0008284">
    <property type="term" value="P:positive regulation of cell population proliferation"/>
    <property type="evidence" value="ECO:0007669"/>
    <property type="project" value="TreeGrafter"/>
</dbReference>
<dbReference type="GO" id="GO:0046427">
    <property type="term" value="P:positive regulation of receptor signaling pathway via JAK-STAT"/>
    <property type="evidence" value="ECO:0007669"/>
    <property type="project" value="TreeGrafter"/>
</dbReference>
<dbReference type="GO" id="GO:0031667">
    <property type="term" value="P:response to nutrient levels"/>
    <property type="evidence" value="ECO:0007669"/>
    <property type="project" value="TreeGrafter"/>
</dbReference>
<dbReference type="FunFam" id="1.20.1250.10:FF:000037">
    <property type="entry name" value="Prolactin"/>
    <property type="match status" value="1"/>
</dbReference>
<dbReference type="Gene3D" id="1.20.1250.10">
    <property type="match status" value="1"/>
</dbReference>
<dbReference type="InterPro" id="IPR009079">
    <property type="entry name" value="4_helix_cytokine-like_core"/>
</dbReference>
<dbReference type="InterPro" id="IPR001400">
    <property type="entry name" value="Somatotropin/Prolactin"/>
</dbReference>
<dbReference type="InterPro" id="IPR018116">
    <property type="entry name" value="Somatotropin_CS"/>
</dbReference>
<dbReference type="PANTHER" id="PTHR11417:SF5">
    <property type="entry name" value="PROLACTIN"/>
    <property type="match status" value="1"/>
</dbReference>
<dbReference type="PANTHER" id="PTHR11417">
    <property type="entry name" value="SOMATOTROPIN,PROLACTIN"/>
    <property type="match status" value="1"/>
</dbReference>
<dbReference type="Pfam" id="PF00103">
    <property type="entry name" value="Hormone_1"/>
    <property type="match status" value="1"/>
</dbReference>
<dbReference type="PRINTS" id="PR00836">
    <property type="entry name" value="SOMATOTROPIN"/>
</dbReference>
<dbReference type="SUPFAM" id="SSF47266">
    <property type="entry name" value="4-helical cytokines"/>
    <property type="match status" value="1"/>
</dbReference>
<dbReference type="PROSITE" id="PS00266">
    <property type="entry name" value="SOMATOTROPIN_1"/>
    <property type="match status" value="1"/>
</dbReference>
<dbReference type="PROSITE" id="PS00338">
    <property type="entry name" value="SOMATOTROPIN_2"/>
    <property type="match status" value="1"/>
</dbReference>